<feature type="chain" id="PRO_0000366884" description="Eukaryotic translation initiation factor 3 subunit C">
    <location>
        <begin position="1"/>
        <end position="839"/>
    </location>
</feature>
<feature type="domain" description="PCI" evidence="2">
    <location>
        <begin position="585"/>
        <end position="759"/>
    </location>
</feature>
<feature type="region of interest" description="Disordered" evidence="3">
    <location>
        <begin position="1"/>
        <end position="93"/>
    </location>
</feature>
<feature type="region of interest" description="Disordered" evidence="3">
    <location>
        <begin position="783"/>
        <end position="839"/>
    </location>
</feature>
<feature type="compositionally biased region" description="Acidic residues" evidence="3">
    <location>
        <begin position="14"/>
        <end position="27"/>
    </location>
</feature>
<feature type="compositionally biased region" description="Acidic residues" evidence="3">
    <location>
        <begin position="34"/>
        <end position="58"/>
    </location>
</feature>
<feature type="compositionally biased region" description="Low complexity" evidence="3">
    <location>
        <begin position="794"/>
        <end position="812"/>
    </location>
</feature>
<feature type="compositionally biased region" description="Polar residues" evidence="3">
    <location>
        <begin position="827"/>
        <end position="839"/>
    </location>
</feature>
<reference key="1">
    <citation type="journal article" date="2007" name="Nat. Biotechnol.">
        <title>Genome sequence of the lignocellulose-bioconverting and xylose-fermenting yeast Pichia stipitis.</title>
        <authorList>
            <person name="Jeffries T.W."/>
            <person name="Grigoriev I.V."/>
            <person name="Grimwood J."/>
            <person name="Laplaza J.M."/>
            <person name="Aerts A."/>
            <person name="Salamov A."/>
            <person name="Schmutz J."/>
            <person name="Lindquist E."/>
            <person name="Dehal P."/>
            <person name="Shapiro H."/>
            <person name="Jin Y.-S."/>
            <person name="Passoth V."/>
            <person name="Richardson P.M."/>
        </authorList>
    </citation>
    <scope>NUCLEOTIDE SEQUENCE [LARGE SCALE GENOMIC DNA]</scope>
    <source>
        <strain>ATCC 58785 / CBS 6054 / NBRC 10063 / NRRL Y-11545</strain>
    </source>
</reference>
<organism>
    <name type="scientific">Scheffersomyces stipitis (strain ATCC 58785 / CBS 6054 / NBRC 10063 / NRRL Y-11545)</name>
    <name type="common">Yeast</name>
    <name type="synonym">Pichia stipitis</name>
    <dbReference type="NCBI Taxonomy" id="322104"/>
    <lineage>
        <taxon>Eukaryota</taxon>
        <taxon>Fungi</taxon>
        <taxon>Dikarya</taxon>
        <taxon>Ascomycota</taxon>
        <taxon>Saccharomycotina</taxon>
        <taxon>Pichiomycetes</taxon>
        <taxon>Debaryomycetaceae</taxon>
        <taxon>Scheffersomyces</taxon>
    </lineage>
</organism>
<accession>A3GGB4</accession>
<dbReference type="EMBL" id="AAVQ01000001">
    <property type="protein sequence ID" value="EAZ63901.2"/>
    <property type="molecule type" value="Genomic_DNA"/>
</dbReference>
<dbReference type="RefSeq" id="XP_001387924.2">
    <property type="nucleotide sequence ID" value="XM_001387887.1"/>
</dbReference>
<dbReference type="SMR" id="A3GGB4"/>
<dbReference type="FunCoup" id="A3GGB4">
    <property type="interactions" value="1226"/>
</dbReference>
<dbReference type="STRING" id="322104.A3GGB4"/>
<dbReference type="GeneID" id="4851313"/>
<dbReference type="KEGG" id="pic:PICST_66436"/>
<dbReference type="eggNOG" id="KOG1076">
    <property type="taxonomic scope" value="Eukaryota"/>
</dbReference>
<dbReference type="HOGENOM" id="CLU_004304_0_2_1"/>
<dbReference type="InParanoid" id="A3GGB4"/>
<dbReference type="OMA" id="FRCGLIK"/>
<dbReference type="OrthoDB" id="29647at2759"/>
<dbReference type="Proteomes" id="UP000002258">
    <property type="component" value="Chromosome 1"/>
</dbReference>
<dbReference type="GO" id="GO:0010494">
    <property type="term" value="C:cytoplasmic stress granule"/>
    <property type="evidence" value="ECO:0007669"/>
    <property type="project" value="EnsemblFungi"/>
</dbReference>
<dbReference type="GO" id="GO:0016282">
    <property type="term" value="C:eukaryotic 43S preinitiation complex"/>
    <property type="evidence" value="ECO:0007669"/>
    <property type="project" value="UniProtKB-UniRule"/>
</dbReference>
<dbReference type="GO" id="GO:0033290">
    <property type="term" value="C:eukaryotic 48S preinitiation complex"/>
    <property type="evidence" value="ECO:0007669"/>
    <property type="project" value="UniProtKB-UniRule"/>
</dbReference>
<dbReference type="GO" id="GO:0071540">
    <property type="term" value="C:eukaryotic translation initiation factor 3 complex, eIF3e"/>
    <property type="evidence" value="ECO:0007669"/>
    <property type="project" value="EnsemblFungi"/>
</dbReference>
<dbReference type="GO" id="GO:0071541">
    <property type="term" value="C:eukaryotic translation initiation factor 3 complex, eIF3m"/>
    <property type="evidence" value="ECO:0007669"/>
    <property type="project" value="EnsemblFungi"/>
</dbReference>
<dbReference type="GO" id="GO:0043614">
    <property type="term" value="C:multi-eIF complex"/>
    <property type="evidence" value="ECO:0007669"/>
    <property type="project" value="EnsemblFungi"/>
</dbReference>
<dbReference type="GO" id="GO:0008541">
    <property type="term" value="C:proteasome regulatory particle, lid subcomplex"/>
    <property type="evidence" value="ECO:0007669"/>
    <property type="project" value="UniProtKB-ARBA"/>
</dbReference>
<dbReference type="GO" id="GO:0003723">
    <property type="term" value="F:RNA binding"/>
    <property type="evidence" value="ECO:0007669"/>
    <property type="project" value="InterPro"/>
</dbReference>
<dbReference type="GO" id="GO:0003743">
    <property type="term" value="F:translation initiation factor activity"/>
    <property type="evidence" value="ECO:0007669"/>
    <property type="project" value="UniProtKB-UniRule"/>
</dbReference>
<dbReference type="GO" id="GO:0031369">
    <property type="term" value="F:translation initiation factor binding"/>
    <property type="evidence" value="ECO:0007669"/>
    <property type="project" value="EnsemblFungi"/>
</dbReference>
<dbReference type="GO" id="GO:0001732">
    <property type="term" value="P:formation of cytoplasmic translation initiation complex"/>
    <property type="evidence" value="ECO:0007669"/>
    <property type="project" value="UniProtKB-UniRule"/>
</dbReference>
<dbReference type="Gene3D" id="1.10.10.10">
    <property type="entry name" value="Winged helix-like DNA-binding domain superfamily/Winged helix DNA-binding domain"/>
    <property type="match status" value="1"/>
</dbReference>
<dbReference type="HAMAP" id="MF_03002">
    <property type="entry name" value="eIF3c"/>
    <property type="match status" value="1"/>
</dbReference>
<dbReference type="InterPro" id="IPR027516">
    <property type="entry name" value="EIF3C"/>
</dbReference>
<dbReference type="InterPro" id="IPR008905">
    <property type="entry name" value="EIF3C_N_dom"/>
</dbReference>
<dbReference type="InterPro" id="IPR000717">
    <property type="entry name" value="PCI_dom"/>
</dbReference>
<dbReference type="InterPro" id="IPR036388">
    <property type="entry name" value="WH-like_DNA-bd_sf"/>
</dbReference>
<dbReference type="InterPro" id="IPR036390">
    <property type="entry name" value="WH_DNA-bd_sf"/>
</dbReference>
<dbReference type="PANTHER" id="PTHR13937">
    <property type="entry name" value="EUKARYOTIC TRANSLATION INITATION FACTOR 3, SUBUNIT 8 EIF3S8 -RELATED"/>
    <property type="match status" value="1"/>
</dbReference>
<dbReference type="PANTHER" id="PTHR13937:SF0">
    <property type="entry name" value="EUKARYOTIC TRANSLATION INITIATION FACTOR 3 SUBUNIT C-RELATED"/>
    <property type="match status" value="1"/>
</dbReference>
<dbReference type="Pfam" id="PF05470">
    <property type="entry name" value="eIF-3c_N"/>
    <property type="match status" value="2"/>
</dbReference>
<dbReference type="Pfam" id="PF01399">
    <property type="entry name" value="PCI"/>
    <property type="match status" value="1"/>
</dbReference>
<dbReference type="SMART" id="SM00088">
    <property type="entry name" value="PINT"/>
    <property type="match status" value="1"/>
</dbReference>
<dbReference type="SUPFAM" id="SSF46785">
    <property type="entry name" value="Winged helix' DNA-binding domain"/>
    <property type="match status" value="1"/>
</dbReference>
<dbReference type="PROSITE" id="PS50250">
    <property type="entry name" value="PCI"/>
    <property type="match status" value="1"/>
</dbReference>
<evidence type="ECO:0000255" key="1">
    <source>
        <dbReference type="HAMAP-Rule" id="MF_03002"/>
    </source>
</evidence>
<evidence type="ECO:0000255" key="2">
    <source>
        <dbReference type="PROSITE-ProRule" id="PRU01185"/>
    </source>
</evidence>
<evidence type="ECO:0000256" key="3">
    <source>
        <dbReference type="SAM" id="MobiDB-lite"/>
    </source>
</evidence>
<keyword id="KW-0963">Cytoplasm</keyword>
<keyword id="KW-0396">Initiation factor</keyword>
<keyword id="KW-0648">Protein biosynthesis</keyword>
<keyword id="KW-1185">Reference proteome</keyword>
<sequence>MSRFFVAGYNSDSSSEEEDLLSSDEELLSSSSEGEQETSDDDSLDFDDQSDSDSSDSDSDGRPSGPAYFLKKDFMKGGAGGDSDSDSEDEGRRVVKSAKDKLLDDMNESIEAINVARRSDTWTTVVSEFDKLGRLLVRAGQQSVSTPNAYIRCLADLEDYITATSENEKTEKSLNAAEARAFNMAKQRVRKQIKEYQAQYDLYRENPELFEREESVDIAAPSRSDVPVEDTTGRVLSPVFTILKQIAETRGKKNIDKYEQIKTLEDLLNDNLAKGSVFELISIYQMLLSIRFDASANQNFMPIEQWKNNEADLTSLIGLLESNKDTYQLSELGSTTDDIDIEPVANESGVKAIFGSITSLIDRLDDEFTRSLQNTDPHSIEYVQRLKDETTIYQLIVRGQSYIESITPAEVQQSVEQLSRVVLRRLEHIYYKPDQLIKANEAEAWKGISHESVIVSKDSTPAELIEGLSSFLTKHKNPVYAKHALLFSVYYYAVNNNYNRAKELFLDSQIFNKIHHADSSLQVQYNRAIVQLGLSAFRNGAVEESHKVLNEIVNSQRSKELLGQGFNSKYPNQATTVEKAKLLPFHQHINLELLECVYSTCSLLIEIPALAAATNSKDSRRKATTKSFKSKLEFHDRQFFTGPPESIKDHIVHASIALSKGDWAKAYQLLSSIKIWKLFPDNDDLLAMMKNQLQVEGLRTYIFSYKSIFSKLSLGKLSQIFELEADKVESIVQKMIETNEIGGTLDESKAFIQFASTEPQRSRLQELAIVMNEKVGLLTEKNEKTSSNGYGKKQPQQQQQQQQQQQQQQQQQKDLLQEDNSRFRYANVNTNNDEFQTTA</sequence>
<gene>
    <name evidence="1" type="primary">NIP1</name>
    <name type="ORF">PICST_66436</name>
</gene>
<name>EIF3C_PICST</name>
<comment type="function">
    <text evidence="1">Component of the eukaryotic translation initiation factor 3 (eIF-3) complex, which is involved in protein synthesis of a specialized repertoire of mRNAs and, together with other initiation factors, stimulates binding of mRNA and methionyl-tRNAi to the 40S ribosome. The eIF-3 complex specifically targets and initiates translation of a subset of mRNAs involved in cell proliferation.</text>
</comment>
<comment type="subunit">
    <text evidence="1">Component of the eukaryotic translation initiation factor 3 (eIF-3) complex.</text>
</comment>
<comment type="subcellular location">
    <subcellularLocation>
        <location evidence="1">Cytoplasm</location>
    </subcellularLocation>
</comment>
<comment type="similarity">
    <text evidence="1">Belongs to the eIF-3 subunit C family.</text>
</comment>
<protein>
    <recommendedName>
        <fullName evidence="1">Eukaryotic translation initiation factor 3 subunit C</fullName>
        <shortName evidence="1">eIF3c</shortName>
    </recommendedName>
    <alternativeName>
        <fullName evidence="1">Eukaryotic translation initiation factor 3 93 kDa subunit homolog</fullName>
        <shortName evidence="1">eIF3 p93</shortName>
    </alternativeName>
    <alternativeName>
        <fullName evidence="1">Translation initiation factor eIF3, p93 subunit homolog</fullName>
    </alternativeName>
</protein>
<proteinExistence type="inferred from homology"/>